<gene>
    <name evidence="1" type="primary">luxD</name>
</gene>
<proteinExistence type="inferred from homology"/>
<accession>P41302</accession>
<organism>
    <name type="scientific">Photobacterium phosphoreum</name>
    <dbReference type="NCBI Taxonomy" id="659"/>
    <lineage>
        <taxon>Bacteria</taxon>
        <taxon>Pseudomonadati</taxon>
        <taxon>Pseudomonadota</taxon>
        <taxon>Gammaproteobacteria</taxon>
        <taxon>Vibrionales</taxon>
        <taxon>Vibrionaceae</taxon>
        <taxon>Photobacterium</taxon>
    </lineage>
</organism>
<name>LUXD_PHOPO</name>
<dbReference type="EC" id="2.3.1.-" evidence="1"/>
<dbReference type="EMBL" id="M64224">
    <property type="protein sequence ID" value="AAA25626.1"/>
    <property type="molecule type" value="Genomic_DNA"/>
</dbReference>
<dbReference type="PIR" id="A39853">
    <property type="entry name" value="A39853"/>
</dbReference>
<dbReference type="SMR" id="P41302"/>
<dbReference type="STRING" id="659.AYY26_10990"/>
<dbReference type="ESTHER" id="phopo-luxd">
    <property type="family name" value="Thioesterase_acyl-transferase"/>
</dbReference>
<dbReference type="BioCyc" id="MetaCyc:MONOMER-19533"/>
<dbReference type="UniPathway" id="UPA00569"/>
<dbReference type="GO" id="GO:0016746">
    <property type="term" value="F:acyltransferase activity"/>
    <property type="evidence" value="ECO:0000314"/>
    <property type="project" value="CACAO"/>
</dbReference>
<dbReference type="GO" id="GO:0016747">
    <property type="term" value="F:acyltransferase activity, transferring groups other than amino-acyl groups"/>
    <property type="evidence" value="ECO:0007669"/>
    <property type="project" value="UniProtKB-UniRule"/>
</dbReference>
<dbReference type="GO" id="GO:0008218">
    <property type="term" value="P:bioluminescence"/>
    <property type="evidence" value="ECO:0007669"/>
    <property type="project" value="UniProtKB-UniRule"/>
</dbReference>
<dbReference type="GO" id="GO:0006631">
    <property type="term" value="P:fatty acid metabolic process"/>
    <property type="evidence" value="ECO:0007669"/>
    <property type="project" value="InterPro"/>
</dbReference>
<dbReference type="FunFam" id="3.40.50.1820:FF:000541">
    <property type="entry name" value="Acyl transferase"/>
    <property type="match status" value="1"/>
</dbReference>
<dbReference type="Gene3D" id="3.40.50.1820">
    <property type="entry name" value="alpha/beta hydrolase"/>
    <property type="match status" value="1"/>
</dbReference>
<dbReference type="HAMAP" id="MF_00774">
    <property type="entry name" value="LuxD"/>
    <property type="match status" value="1"/>
</dbReference>
<dbReference type="InterPro" id="IPR029058">
    <property type="entry name" value="AB_hydrolase_fold"/>
</dbReference>
<dbReference type="InterPro" id="IPR003157">
    <property type="entry name" value="LuxD"/>
</dbReference>
<dbReference type="NCBIfam" id="NF010127">
    <property type="entry name" value="PRK13604.1"/>
    <property type="match status" value="1"/>
</dbReference>
<dbReference type="Pfam" id="PF02273">
    <property type="entry name" value="Acyl_transf_2"/>
    <property type="match status" value="1"/>
</dbReference>
<dbReference type="PIRSF" id="PIRSF009416">
    <property type="entry name" value="LuxD"/>
    <property type="match status" value="1"/>
</dbReference>
<dbReference type="SUPFAM" id="SSF53474">
    <property type="entry name" value="alpha/beta-Hydrolases"/>
    <property type="match status" value="1"/>
</dbReference>
<reference key="1">
    <citation type="journal article" date="1991" name="J. Biol. Chem.">
        <title>A lux-specific myristoyl transferase in luminescent bacteria related to eukaryotic serine esterases.</title>
        <authorList>
            <person name="Ferri S.R."/>
            <person name="Meighen E.A."/>
        </authorList>
    </citation>
    <scope>NUCLEOTIDE SEQUENCE [GENOMIC DNA]</scope>
</reference>
<feature type="chain" id="PRO_0000220192" description="Acyl transferase">
    <location>
        <begin position="1"/>
        <end position="306"/>
    </location>
</feature>
<feature type="active site" description="Charge relay system" evidence="1">
    <location>
        <position position="117"/>
    </location>
</feature>
<feature type="active site" description="Charge relay system" evidence="1">
    <location>
        <position position="214"/>
    </location>
</feature>
<feature type="active site" description="Charge relay system" evidence="1">
    <location>
        <position position="244"/>
    </location>
</feature>
<evidence type="ECO:0000255" key="1">
    <source>
        <dbReference type="HAMAP-Rule" id="MF_00774"/>
    </source>
</evidence>
<keyword id="KW-0012">Acyltransferase</keyword>
<keyword id="KW-0455">Luminescence</keyword>
<keyword id="KW-0808">Transferase</keyword>
<protein>
    <recommendedName>
        <fullName evidence="1">Acyl transferase</fullName>
        <shortName evidence="1">ACT</shortName>
        <ecNumber evidence="1">2.3.1.-</ecNumber>
    </recommendedName>
    <alternativeName>
        <fullName evidence="1">C14ACP-TE</fullName>
    </alternativeName>
    <alternativeName>
        <fullName evidence="1">Myristoyl-ACP-specific thioesterase</fullName>
    </alternativeName>
</protein>
<sequence>MKSENNSVPIDHVIKVDNERHIRVWETFPKNQCDKRNNTIVIASGFARRMDHFAGLAEYLSTNGFHVIRYDSLNHVGLSSGEIDQFSMSVGKKSLLTVIDWLKSEHGIDQVGLIASSLSARIAYDIVADVNLSFLITAVGVVNLRNTLEQALKYDYLQMEIDEIPEDLDFDGYNLGSKVFVTDCFENNWDTLDSTINKTKNLNVPFIAFVANDDSWVQQHEVEELMSNINSDKTKIYSLIGSSHDLGENLIVLRNFYQSITKAAIALDSNLVGLVSEIIEPQFEALTIATVNERRLKNKIQSKSLA</sequence>
<comment type="function">
    <text>Acyl transferase is part of the fatty acid reductase system required for aldehyde biosynthesis; it produces fatty acids for the luminescent reaction.</text>
</comment>
<comment type="pathway">
    <text evidence="1">Lipid metabolism; fatty acid reduction for biolumincescence.</text>
</comment>
<comment type="similarity">
    <text evidence="1">Belongs to the LuxD family.</text>
</comment>